<gene>
    <name evidence="1" type="primary">eno</name>
    <name type="ordered locus">Strop_0890</name>
</gene>
<accession>A4X3B7</accession>
<evidence type="ECO:0000255" key="1">
    <source>
        <dbReference type="HAMAP-Rule" id="MF_00318"/>
    </source>
</evidence>
<feature type="chain" id="PRO_1000079149" description="Enolase">
    <location>
        <begin position="1"/>
        <end position="427"/>
    </location>
</feature>
<feature type="active site" description="Proton donor" evidence="1">
    <location>
        <position position="205"/>
    </location>
</feature>
<feature type="active site" description="Proton acceptor" evidence="1">
    <location>
        <position position="335"/>
    </location>
</feature>
<feature type="binding site" evidence="1">
    <location>
        <position position="163"/>
    </location>
    <ligand>
        <name>(2R)-2-phosphoglycerate</name>
        <dbReference type="ChEBI" id="CHEBI:58289"/>
    </ligand>
</feature>
<feature type="binding site" evidence="1">
    <location>
        <position position="242"/>
    </location>
    <ligand>
        <name>Mg(2+)</name>
        <dbReference type="ChEBI" id="CHEBI:18420"/>
    </ligand>
</feature>
<feature type="binding site" evidence="1">
    <location>
        <position position="283"/>
    </location>
    <ligand>
        <name>Mg(2+)</name>
        <dbReference type="ChEBI" id="CHEBI:18420"/>
    </ligand>
</feature>
<feature type="binding site" evidence="1">
    <location>
        <position position="310"/>
    </location>
    <ligand>
        <name>Mg(2+)</name>
        <dbReference type="ChEBI" id="CHEBI:18420"/>
    </ligand>
</feature>
<feature type="binding site" evidence="1">
    <location>
        <position position="335"/>
    </location>
    <ligand>
        <name>(2R)-2-phosphoglycerate</name>
        <dbReference type="ChEBI" id="CHEBI:58289"/>
    </ligand>
</feature>
<feature type="binding site" evidence="1">
    <location>
        <position position="364"/>
    </location>
    <ligand>
        <name>(2R)-2-phosphoglycerate</name>
        <dbReference type="ChEBI" id="CHEBI:58289"/>
    </ligand>
</feature>
<feature type="binding site" evidence="1">
    <location>
        <position position="365"/>
    </location>
    <ligand>
        <name>(2R)-2-phosphoglycerate</name>
        <dbReference type="ChEBI" id="CHEBI:58289"/>
    </ligand>
</feature>
<feature type="binding site" evidence="1">
    <location>
        <position position="386"/>
    </location>
    <ligand>
        <name>(2R)-2-phosphoglycerate</name>
        <dbReference type="ChEBI" id="CHEBI:58289"/>
    </ligand>
</feature>
<reference key="1">
    <citation type="journal article" date="2007" name="Proc. Natl. Acad. Sci. U.S.A.">
        <title>Genome sequencing reveals complex secondary metabolome in the marine actinomycete Salinispora tropica.</title>
        <authorList>
            <person name="Udwary D.W."/>
            <person name="Zeigler L."/>
            <person name="Asolkar R.N."/>
            <person name="Singan V."/>
            <person name="Lapidus A."/>
            <person name="Fenical W."/>
            <person name="Jensen P.R."/>
            <person name="Moore B.S."/>
        </authorList>
    </citation>
    <scope>NUCLEOTIDE SEQUENCE [LARGE SCALE GENOMIC DNA]</scope>
    <source>
        <strain>ATCC BAA-916 / DSM 44818 / JCM 13857 / NBRC 105044 / CNB-440</strain>
    </source>
</reference>
<name>ENO_SALTO</name>
<organism>
    <name type="scientific">Salinispora tropica (strain ATCC BAA-916 / DSM 44818 / JCM 13857 / NBRC 105044 / CNB-440)</name>
    <dbReference type="NCBI Taxonomy" id="369723"/>
    <lineage>
        <taxon>Bacteria</taxon>
        <taxon>Bacillati</taxon>
        <taxon>Actinomycetota</taxon>
        <taxon>Actinomycetes</taxon>
        <taxon>Micromonosporales</taxon>
        <taxon>Micromonosporaceae</taxon>
        <taxon>Salinispora</taxon>
    </lineage>
</organism>
<protein>
    <recommendedName>
        <fullName evidence="1">Enolase</fullName>
        <ecNumber evidence="1">4.2.1.11</ecNumber>
    </recommendedName>
    <alternativeName>
        <fullName evidence="1">2-phospho-D-glycerate hydro-lyase</fullName>
    </alternativeName>
    <alternativeName>
        <fullName evidence="1">2-phosphoglycerate dehydratase</fullName>
    </alternativeName>
</protein>
<dbReference type="EC" id="4.2.1.11" evidence="1"/>
<dbReference type="EMBL" id="CP000667">
    <property type="protein sequence ID" value="ABP53367.1"/>
    <property type="molecule type" value="Genomic_DNA"/>
</dbReference>
<dbReference type="RefSeq" id="WP_011904801.1">
    <property type="nucleotide sequence ID" value="NC_009380.1"/>
</dbReference>
<dbReference type="SMR" id="A4X3B7"/>
<dbReference type="STRING" id="369723.Strop_0890"/>
<dbReference type="KEGG" id="stp:Strop_0890"/>
<dbReference type="PATRIC" id="fig|369723.5.peg.908"/>
<dbReference type="eggNOG" id="COG0148">
    <property type="taxonomic scope" value="Bacteria"/>
</dbReference>
<dbReference type="HOGENOM" id="CLU_031223_2_1_11"/>
<dbReference type="UniPathway" id="UPA00109">
    <property type="reaction ID" value="UER00187"/>
</dbReference>
<dbReference type="Proteomes" id="UP000000235">
    <property type="component" value="Chromosome"/>
</dbReference>
<dbReference type="GO" id="GO:0009986">
    <property type="term" value="C:cell surface"/>
    <property type="evidence" value="ECO:0007669"/>
    <property type="project" value="UniProtKB-SubCell"/>
</dbReference>
<dbReference type="GO" id="GO:0005576">
    <property type="term" value="C:extracellular region"/>
    <property type="evidence" value="ECO:0007669"/>
    <property type="project" value="UniProtKB-SubCell"/>
</dbReference>
<dbReference type="GO" id="GO:0000015">
    <property type="term" value="C:phosphopyruvate hydratase complex"/>
    <property type="evidence" value="ECO:0007669"/>
    <property type="project" value="InterPro"/>
</dbReference>
<dbReference type="GO" id="GO:0000287">
    <property type="term" value="F:magnesium ion binding"/>
    <property type="evidence" value="ECO:0007669"/>
    <property type="project" value="UniProtKB-UniRule"/>
</dbReference>
<dbReference type="GO" id="GO:0004634">
    <property type="term" value="F:phosphopyruvate hydratase activity"/>
    <property type="evidence" value="ECO:0007669"/>
    <property type="project" value="UniProtKB-UniRule"/>
</dbReference>
<dbReference type="GO" id="GO:0006096">
    <property type="term" value="P:glycolytic process"/>
    <property type="evidence" value="ECO:0007669"/>
    <property type="project" value="UniProtKB-UniRule"/>
</dbReference>
<dbReference type="CDD" id="cd03313">
    <property type="entry name" value="enolase"/>
    <property type="match status" value="1"/>
</dbReference>
<dbReference type="FunFam" id="3.20.20.120:FF:000001">
    <property type="entry name" value="Enolase"/>
    <property type="match status" value="1"/>
</dbReference>
<dbReference type="FunFam" id="3.30.390.10:FF:000001">
    <property type="entry name" value="Enolase"/>
    <property type="match status" value="1"/>
</dbReference>
<dbReference type="Gene3D" id="3.20.20.120">
    <property type="entry name" value="Enolase-like C-terminal domain"/>
    <property type="match status" value="1"/>
</dbReference>
<dbReference type="Gene3D" id="3.30.390.10">
    <property type="entry name" value="Enolase-like, N-terminal domain"/>
    <property type="match status" value="1"/>
</dbReference>
<dbReference type="HAMAP" id="MF_00318">
    <property type="entry name" value="Enolase"/>
    <property type="match status" value="1"/>
</dbReference>
<dbReference type="InterPro" id="IPR000941">
    <property type="entry name" value="Enolase"/>
</dbReference>
<dbReference type="InterPro" id="IPR036849">
    <property type="entry name" value="Enolase-like_C_sf"/>
</dbReference>
<dbReference type="InterPro" id="IPR029017">
    <property type="entry name" value="Enolase-like_N"/>
</dbReference>
<dbReference type="InterPro" id="IPR020810">
    <property type="entry name" value="Enolase_C"/>
</dbReference>
<dbReference type="InterPro" id="IPR020809">
    <property type="entry name" value="Enolase_CS"/>
</dbReference>
<dbReference type="InterPro" id="IPR020811">
    <property type="entry name" value="Enolase_N"/>
</dbReference>
<dbReference type="NCBIfam" id="TIGR01060">
    <property type="entry name" value="eno"/>
    <property type="match status" value="1"/>
</dbReference>
<dbReference type="PANTHER" id="PTHR11902">
    <property type="entry name" value="ENOLASE"/>
    <property type="match status" value="1"/>
</dbReference>
<dbReference type="PANTHER" id="PTHR11902:SF1">
    <property type="entry name" value="ENOLASE"/>
    <property type="match status" value="1"/>
</dbReference>
<dbReference type="Pfam" id="PF00113">
    <property type="entry name" value="Enolase_C"/>
    <property type="match status" value="1"/>
</dbReference>
<dbReference type="Pfam" id="PF03952">
    <property type="entry name" value="Enolase_N"/>
    <property type="match status" value="1"/>
</dbReference>
<dbReference type="PIRSF" id="PIRSF001400">
    <property type="entry name" value="Enolase"/>
    <property type="match status" value="1"/>
</dbReference>
<dbReference type="PRINTS" id="PR00148">
    <property type="entry name" value="ENOLASE"/>
</dbReference>
<dbReference type="SFLD" id="SFLDS00001">
    <property type="entry name" value="Enolase"/>
    <property type="match status" value="1"/>
</dbReference>
<dbReference type="SFLD" id="SFLDF00002">
    <property type="entry name" value="enolase"/>
    <property type="match status" value="1"/>
</dbReference>
<dbReference type="SMART" id="SM01192">
    <property type="entry name" value="Enolase_C"/>
    <property type="match status" value="1"/>
</dbReference>
<dbReference type="SMART" id="SM01193">
    <property type="entry name" value="Enolase_N"/>
    <property type="match status" value="1"/>
</dbReference>
<dbReference type="SUPFAM" id="SSF51604">
    <property type="entry name" value="Enolase C-terminal domain-like"/>
    <property type="match status" value="1"/>
</dbReference>
<dbReference type="SUPFAM" id="SSF54826">
    <property type="entry name" value="Enolase N-terminal domain-like"/>
    <property type="match status" value="1"/>
</dbReference>
<dbReference type="PROSITE" id="PS00164">
    <property type="entry name" value="ENOLASE"/>
    <property type="match status" value="1"/>
</dbReference>
<comment type="function">
    <text evidence="1">Catalyzes the reversible conversion of 2-phosphoglycerate (2-PG) into phosphoenolpyruvate (PEP). It is essential for the degradation of carbohydrates via glycolysis.</text>
</comment>
<comment type="catalytic activity">
    <reaction evidence="1">
        <text>(2R)-2-phosphoglycerate = phosphoenolpyruvate + H2O</text>
        <dbReference type="Rhea" id="RHEA:10164"/>
        <dbReference type="ChEBI" id="CHEBI:15377"/>
        <dbReference type="ChEBI" id="CHEBI:58289"/>
        <dbReference type="ChEBI" id="CHEBI:58702"/>
        <dbReference type="EC" id="4.2.1.11"/>
    </reaction>
</comment>
<comment type="cofactor">
    <cofactor evidence="1">
        <name>Mg(2+)</name>
        <dbReference type="ChEBI" id="CHEBI:18420"/>
    </cofactor>
    <text evidence="1">Binds a second Mg(2+) ion via substrate during catalysis.</text>
</comment>
<comment type="pathway">
    <text evidence="1">Carbohydrate degradation; glycolysis; pyruvate from D-glyceraldehyde 3-phosphate: step 4/5.</text>
</comment>
<comment type="subcellular location">
    <subcellularLocation>
        <location evidence="1">Cytoplasm</location>
    </subcellularLocation>
    <subcellularLocation>
        <location evidence="1">Secreted</location>
    </subcellularLocation>
    <subcellularLocation>
        <location evidence="1">Cell surface</location>
    </subcellularLocation>
    <text evidence="1">Fractions of enolase are present in both the cytoplasm and on the cell surface.</text>
</comment>
<comment type="similarity">
    <text evidence="1">Belongs to the enolase family.</text>
</comment>
<keyword id="KW-0963">Cytoplasm</keyword>
<keyword id="KW-0324">Glycolysis</keyword>
<keyword id="KW-0456">Lyase</keyword>
<keyword id="KW-0460">Magnesium</keyword>
<keyword id="KW-0479">Metal-binding</keyword>
<keyword id="KW-1185">Reference proteome</keyword>
<keyword id="KW-0964">Secreted</keyword>
<sequence>MATIEGIVAREILDSRGNPTVEVEVGLDDGTIARAAVPSGASTGAFEAVELRDGEKDRYLGKGVTQAVSNIEDKIVDELIGYEASEQRLIDQKMLDLDGTDNKSQLGANAILGVSLAVAKAAASAAELNLFRYLGGPNAHLLPVPMMNILNGGAHADSNVDIQEFMIAPIGAPTFREALRSGAEVYHALKSVLKKKDLATGLGDEGGFAPNLPTNAAALDLISEAVEKAGYRLGTDIVFALDVAATEFFENGTYTFEGVEKTAEEMSSYYTKLADAYPIVSIEDPLAEDDWSGWRTLTASVGDRIQIVGDDLFVTNPQRIARGIAENAANSVLVKVNQIGSLTETLDAVDLAHRAGFRCMMSHRSGETEDTTIADLAVATGCGQIKTGAPARSDRVAKYNQLLRIEEELADAARYAGSGAFPRYRSA</sequence>
<proteinExistence type="inferred from homology"/>